<organism>
    <name type="scientific">Danio rerio</name>
    <name type="common">Zebrafish</name>
    <name type="synonym">Brachydanio rerio</name>
    <dbReference type="NCBI Taxonomy" id="7955"/>
    <lineage>
        <taxon>Eukaryota</taxon>
        <taxon>Metazoa</taxon>
        <taxon>Chordata</taxon>
        <taxon>Craniata</taxon>
        <taxon>Vertebrata</taxon>
        <taxon>Euteleostomi</taxon>
        <taxon>Actinopterygii</taxon>
        <taxon>Neopterygii</taxon>
        <taxon>Teleostei</taxon>
        <taxon>Ostariophysi</taxon>
        <taxon>Cypriniformes</taxon>
        <taxon>Danionidae</taxon>
        <taxon>Danioninae</taxon>
        <taxon>Danio</taxon>
    </lineage>
</organism>
<keyword id="KW-1003">Cell membrane</keyword>
<keyword id="KW-1015">Disulfide bond</keyword>
<keyword id="KW-0325">Glycoprotein</keyword>
<keyword id="KW-0407">Ion channel</keyword>
<keyword id="KW-0406">Ion transport</keyword>
<keyword id="KW-0472">Membrane</keyword>
<keyword id="KW-1185">Reference proteome</keyword>
<keyword id="KW-0677">Repeat</keyword>
<keyword id="KW-0915">Sodium</keyword>
<keyword id="KW-0894">Sodium channel</keyword>
<keyword id="KW-0739">Sodium transport</keyword>
<keyword id="KW-0812">Transmembrane</keyword>
<keyword id="KW-1133">Transmembrane helix</keyword>
<keyword id="KW-0813">Transport</keyword>
<keyword id="KW-0851">Voltage-gated channel</keyword>
<gene>
    <name type="primary">scn4ab</name>
    <name type="synonym">nav1.4b</name>
</gene>
<comment type="function">
    <text evidence="3">Pore-forming subunit of a voltage-gated sodium (Nav) channel that directly mediates the depolarizing phase of action potentials in excitable membranes. Navs, also called VGSCs (voltage-gated sodium channels) or VDSCs (voltage-dependent sodium channels), operate by switching between closed and open conformations depending on the voltage difference across the membrane. In the open conformation they allow Na(+) ions to selectively pass through the pore, along their electrochemical gradient. The influx of Na+ ions provokes membrane depolarization, initiating the propagation of electrical signals throughout cells and tissues.</text>
</comment>
<comment type="catalytic activity">
    <reaction evidence="3">
        <text>Na(+)(in) = Na(+)(out)</text>
        <dbReference type="Rhea" id="RHEA:34963"/>
        <dbReference type="ChEBI" id="CHEBI:29101"/>
    </reaction>
</comment>
<comment type="subunit">
    <text evidence="3">Voltage-gated sodium (Nav) channels consist of an ion-conducting alpha subunit which is functional on its own associated with regulatory beta subunits.</text>
</comment>
<comment type="subcellular location">
    <subcellularLocation>
        <location evidence="2">Cell membrane</location>
        <topology evidence="3">Multi-pass membrane protein</topology>
    </subcellularLocation>
</comment>
<comment type="tissue specificity">
    <text evidence="7">Expressed in skeletal muscle, heart, brain, spinal cord, and eye.</text>
</comment>
<comment type="domain">
    <text evidence="3">The sequence contains 4 internal repeats, each with 5 hydrophobic segments (S1, S2, S3, S5, S6) and one positively charged segment (S4). Segments S4 are probably the voltage-sensors and are characterized by a series of positively charged amino acids at every third position.</text>
</comment>
<comment type="PTM">
    <text evidence="1">Lacks the cysteine which covalently binds the conotoxin GVIIJ. This cysteine (position 719) is speculated in other sodium channel subunits alpha to be implied in covalent binding with the sodium channel subunit beta-2 or beta-4.</text>
</comment>
<comment type="similarity">
    <text evidence="8">Belongs to the sodium channel (TC 1.A.1.10) family. Nav1.4/SCN4A subfamily.</text>
</comment>
<proteinExistence type="evidence at transcript level"/>
<evidence type="ECO:0000250" key="1">
    <source>
        <dbReference type="UniProtKB" id="P15389"/>
    </source>
</evidence>
<evidence type="ECO:0000250" key="2">
    <source>
        <dbReference type="UniProtKB" id="P15390"/>
    </source>
</evidence>
<evidence type="ECO:0000250" key="3">
    <source>
        <dbReference type="UniProtKB" id="P35499"/>
    </source>
</evidence>
<evidence type="ECO:0000255" key="4"/>
<evidence type="ECO:0000255" key="5">
    <source>
        <dbReference type="PROSITE-ProRule" id="PRU00116"/>
    </source>
</evidence>
<evidence type="ECO:0000256" key="6">
    <source>
        <dbReference type="SAM" id="MobiDB-lite"/>
    </source>
</evidence>
<evidence type="ECO:0000269" key="7">
    <source>
    </source>
</evidence>
<evidence type="ECO:0000305" key="8"/>
<reference key="1">
    <citation type="journal article" date="2006" name="J. Mol. Evol.">
        <title>Gene duplications and evolution of vertebrate voltage-gated sodium channels.</title>
        <authorList>
            <person name="Novak A.E."/>
            <person name="Jost M.C."/>
            <person name="Lu Y."/>
            <person name="Taylor A.D."/>
            <person name="Zakon H.H."/>
            <person name="Ribera A.B."/>
        </authorList>
    </citation>
    <scope>NUCLEOTIDE SEQUENCE [MRNA]</scope>
    <scope>TISSUE SPECIFICITY</scope>
</reference>
<reference key="2">
    <citation type="journal article" date="2005" name="Curr. Biol.">
        <title>Genetic basis of tetrodotoxin resistance in pufferfishes.</title>
        <authorList>
            <person name="Venkatesh B."/>
            <person name="Lu S.Q."/>
            <person name="Dandona N."/>
            <person name="See S.L."/>
            <person name="Brenner S."/>
            <person name="Soong T.W."/>
        </authorList>
    </citation>
    <scope>NUCLEOTIDE SEQUENCE [GENOMIC DNA]</scope>
</reference>
<reference key="3">
    <citation type="submission" date="2008-04" db="EMBL/GenBank/DDBJ databases">
        <authorList>
            <consortium name="NIH - Zebrafish Gene Collection (ZGC) project"/>
        </authorList>
    </citation>
    <scope>NUCLEOTIDE SEQUENCE [LARGE SCALE MRNA]</scope>
</reference>
<feature type="chain" id="PRO_0000371318" description="Sodium channel protein type 4 subunit alpha B">
    <location>
        <begin position="1"/>
        <end position="1784"/>
    </location>
</feature>
<feature type="topological domain" description="Cytoplasmic" evidence="8">
    <location>
        <begin position="1"/>
        <end position="130"/>
    </location>
</feature>
<feature type="transmembrane region" description="Helical; Name=S1 of repeat I" evidence="3">
    <location>
        <begin position="131"/>
        <end position="149"/>
    </location>
</feature>
<feature type="topological domain" description="Extracellular" evidence="8">
    <location>
        <begin position="150"/>
        <end position="156"/>
    </location>
</feature>
<feature type="transmembrane region" description="Helical; Name=S2 of repeat I" evidence="3">
    <location>
        <begin position="157"/>
        <end position="177"/>
    </location>
</feature>
<feature type="topological domain" description="Cytoplasmic" evidence="8">
    <location>
        <begin position="178"/>
        <end position="191"/>
    </location>
</feature>
<feature type="transmembrane region" description="Helical; Name=S3 of repeat I" evidence="3">
    <location>
        <begin position="192"/>
        <end position="209"/>
    </location>
</feature>
<feature type="topological domain" description="Extracellular" evidence="8">
    <location>
        <begin position="210"/>
        <end position="215"/>
    </location>
</feature>
<feature type="transmembrane region" description="Helical; Name=S4 of repeat I" evidence="3">
    <location>
        <begin position="216"/>
        <end position="232"/>
    </location>
</feature>
<feature type="topological domain" description="Cytoplasmic" evidence="8">
    <location>
        <begin position="233"/>
        <end position="251"/>
    </location>
</feature>
<feature type="transmembrane region" description="Helical; Name=S5 of repeat I" evidence="3">
    <location>
        <begin position="252"/>
        <end position="271"/>
    </location>
</feature>
<feature type="topological domain" description="Extracellular" evidence="8">
    <location>
        <begin position="272"/>
        <end position="366"/>
    </location>
</feature>
<feature type="intramembrane region" description="Pore-forming" evidence="3">
    <location>
        <begin position="367"/>
        <end position="391"/>
    </location>
</feature>
<feature type="topological domain" description="Extracellular" evidence="8">
    <location>
        <begin position="392"/>
        <end position="398"/>
    </location>
</feature>
<feature type="transmembrane region" description="Helical; Name=S6 of repeat I" evidence="3">
    <location>
        <begin position="399"/>
        <end position="419"/>
    </location>
</feature>
<feature type="topological domain" description="Cytoplasmic" evidence="8">
    <location>
        <begin position="420"/>
        <end position="568"/>
    </location>
</feature>
<feature type="transmembrane region" description="Helical; Name=S1 of repeat II" evidence="3">
    <location>
        <begin position="569"/>
        <end position="587"/>
    </location>
</feature>
<feature type="topological domain" description="Extracellular" evidence="8">
    <location>
        <begin position="588"/>
        <end position="598"/>
    </location>
</feature>
<feature type="transmembrane region" description="Helical; Name=S2 of repeat II" evidence="3">
    <location>
        <begin position="599"/>
        <end position="618"/>
    </location>
</feature>
<feature type="topological domain" description="Cytoplasmic" evidence="8">
    <location>
        <begin position="619"/>
        <end position="632"/>
    </location>
</feature>
<feature type="transmembrane region" description="Helical; Name=S3 of repeat II" evidence="3">
    <location>
        <begin position="633"/>
        <end position="652"/>
    </location>
</feature>
<feature type="topological domain" description="Extracellular" evidence="8">
    <location>
        <begin position="653"/>
        <end position="654"/>
    </location>
</feature>
<feature type="transmembrane region" description="Helical; Name=S4 of repeat II" evidence="3">
    <location>
        <begin position="655"/>
        <end position="672"/>
    </location>
</feature>
<feature type="topological domain" description="Cytoplasmic" evidence="8">
    <location>
        <begin position="673"/>
        <end position="688"/>
    </location>
</feature>
<feature type="transmembrane region" description="Helical; Name=S5 of repeat II" evidence="3">
    <location>
        <begin position="689"/>
        <end position="707"/>
    </location>
</feature>
<feature type="topological domain" description="Extracellular" evidence="8">
    <location>
        <begin position="708"/>
        <end position="736"/>
    </location>
</feature>
<feature type="intramembrane region" description="Pore-forming" evidence="3">
    <location>
        <begin position="737"/>
        <end position="757"/>
    </location>
</feature>
<feature type="topological domain" description="Extracellular" evidence="8">
    <location>
        <begin position="758"/>
        <end position="768"/>
    </location>
</feature>
<feature type="transmembrane region" description="Helical; Name=S6 of repeat II" evidence="3">
    <location>
        <begin position="769"/>
        <end position="787"/>
    </location>
</feature>
<feature type="topological domain" description="Cytoplasmic" evidence="8">
    <location>
        <begin position="788"/>
        <end position="973"/>
    </location>
</feature>
<feature type="transmembrane region" description="Helical; Name=S1 of repeat III" evidence="3">
    <location>
        <begin position="974"/>
        <end position="991"/>
    </location>
</feature>
<feature type="topological domain" description="Extracellular" evidence="8">
    <location>
        <begin position="992"/>
        <end position="1004"/>
    </location>
</feature>
<feature type="transmembrane region" description="Helical; Name=S2 of repeat III" evidence="3">
    <location>
        <begin position="1005"/>
        <end position="1023"/>
    </location>
</feature>
<feature type="topological domain" description="Cytoplasmic" evidence="8">
    <location>
        <begin position="1024"/>
        <end position="1037"/>
    </location>
</feature>
<feature type="transmembrane region" description="Helical; Name=S3 of repeat III" evidence="3">
    <location>
        <begin position="1038"/>
        <end position="1056"/>
    </location>
</feature>
<feature type="topological domain" description="Extracellular" evidence="8">
    <location>
        <begin position="1057"/>
        <end position="1064"/>
    </location>
</feature>
<feature type="transmembrane region" description="Helical; Name=S4 of repeat III" evidence="3">
    <location>
        <begin position="1065"/>
        <end position="1083"/>
    </location>
</feature>
<feature type="topological domain" description="Cytoplasmic" evidence="8">
    <location>
        <begin position="1084"/>
        <end position="1101"/>
    </location>
</feature>
<feature type="transmembrane region" description="Helical; Name=S5 of repeat III" evidence="3">
    <location>
        <begin position="1102"/>
        <end position="1121"/>
    </location>
</feature>
<feature type="topological domain" description="Extracellular" evidence="8">
    <location>
        <begin position="1122"/>
        <end position="1173"/>
    </location>
</feature>
<feature type="intramembrane region" description="Pore-forming" evidence="3">
    <location>
        <begin position="1174"/>
        <end position="1195"/>
    </location>
</feature>
<feature type="topological domain" description="Extracellular" evidence="8">
    <location>
        <begin position="1196"/>
        <end position="1212"/>
    </location>
</feature>
<feature type="transmembrane region" description="Helical; Name=S6 of repeat III" evidence="3">
    <location>
        <begin position="1213"/>
        <end position="1234"/>
    </location>
</feature>
<feature type="topological domain" description="Cytoplasmic" evidence="8">
    <location>
        <begin position="1235"/>
        <end position="1297"/>
    </location>
</feature>
<feature type="transmembrane region" description="Helical; Name=S1 of repeat IV" evidence="3">
    <location>
        <begin position="1298"/>
        <end position="1315"/>
    </location>
</feature>
<feature type="topological domain" description="Extracellular" evidence="8">
    <location>
        <begin position="1316"/>
        <end position="1326"/>
    </location>
</feature>
<feature type="transmembrane region" description="Helical; Name=S2 of repeat IV" evidence="3">
    <location>
        <begin position="1327"/>
        <end position="1345"/>
    </location>
</feature>
<feature type="topological domain" description="Cytoplasmic" evidence="8">
    <location>
        <begin position="1346"/>
        <end position="1357"/>
    </location>
</feature>
<feature type="transmembrane region" description="Helical; Name=S3 of repeat IV" evidence="3">
    <location>
        <begin position="1358"/>
        <end position="1375"/>
    </location>
</feature>
<feature type="topological domain" description="Extracellular" evidence="8">
    <location>
        <begin position="1376"/>
        <end position="1388"/>
    </location>
</feature>
<feature type="transmembrane region" description="Helical; Name=S4 of repeat IV" evidence="3">
    <location>
        <begin position="1389"/>
        <end position="1405"/>
    </location>
</feature>
<feature type="topological domain" description="Cytoplasmic" evidence="8">
    <location>
        <begin position="1406"/>
        <end position="1424"/>
    </location>
</feature>
<feature type="transmembrane region" description="Helical; Name=S5 of repeat IV" evidence="3">
    <location>
        <begin position="1425"/>
        <end position="1442"/>
    </location>
</feature>
<feature type="topological domain" description="Extracellular" evidence="8">
    <location>
        <begin position="1443"/>
        <end position="1464"/>
    </location>
</feature>
<feature type="intramembrane region" description="Pore-forming" evidence="3">
    <location>
        <begin position="1465"/>
        <end position="1487"/>
    </location>
</feature>
<feature type="topological domain" description="Extracellular" evidence="8">
    <location>
        <begin position="1488"/>
        <end position="1516"/>
    </location>
</feature>
<feature type="transmembrane region" description="Helical; Name=S6 of repeat IV" evidence="3">
    <location>
        <begin position="1517"/>
        <end position="1539"/>
    </location>
</feature>
<feature type="topological domain" description="Cytoplasmic" evidence="8">
    <location>
        <begin position="1540"/>
        <end position="1784"/>
    </location>
</feature>
<feature type="repeat" description="I" evidence="8">
    <location>
        <begin position="112"/>
        <end position="429"/>
    </location>
</feature>
<feature type="repeat" description="II" evidence="8">
    <location>
        <begin position="550"/>
        <end position="821"/>
    </location>
</feature>
<feature type="repeat" description="III" evidence="8">
    <location>
        <begin position="954"/>
        <end position="1269"/>
    </location>
</feature>
<feature type="repeat" description="IV" evidence="8">
    <location>
        <begin position="1278"/>
        <end position="1575"/>
    </location>
</feature>
<feature type="domain" description="IQ" evidence="5">
    <location>
        <begin position="1669"/>
        <end position="1698"/>
    </location>
</feature>
<feature type="region of interest" description="Disordered" evidence="6">
    <location>
        <begin position="29"/>
        <end position="48"/>
    </location>
</feature>
<feature type="region of interest" description="Disordered" evidence="6">
    <location>
        <begin position="455"/>
        <end position="478"/>
    </location>
</feature>
<feature type="region of interest" description="Disordered" evidence="6">
    <location>
        <begin position="870"/>
        <end position="928"/>
    </location>
</feature>
<feature type="region of interest" description="Important for rapid channel inactivation" evidence="2">
    <location>
        <begin position="1253"/>
        <end position="1255"/>
    </location>
</feature>
<feature type="compositionally biased region" description="Acidic residues" evidence="6">
    <location>
        <begin position="875"/>
        <end position="892"/>
    </location>
</feature>
<feature type="compositionally biased region" description="Basic and acidic residues" evidence="6">
    <location>
        <begin position="893"/>
        <end position="903"/>
    </location>
</feature>
<feature type="compositionally biased region" description="Acidic residues" evidence="6">
    <location>
        <begin position="917"/>
        <end position="928"/>
    </location>
</feature>
<feature type="glycosylation site" description="N-linked (GlcNAc...) asparagine" evidence="4">
    <location>
        <position position="213"/>
    </location>
</feature>
<feature type="glycosylation site" description="N-linked (GlcNAc...) asparagine" evidence="4">
    <location>
        <position position="291"/>
    </location>
</feature>
<feature type="glycosylation site" description="N-linked (GlcNAc...) asparagine" evidence="4">
    <location>
        <position position="304"/>
    </location>
</feature>
<feature type="glycosylation site" description="N-linked (GlcNAc...) asparagine" evidence="4">
    <location>
        <position position="337"/>
    </location>
</feature>
<feature type="glycosylation site" description="N-linked (GlcNAc...) asparagine" evidence="4">
    <location>
        <position position="1133"/>
    </location>
</feature>
<feature type="glycosylation site" description="N-linked (GlcNAc...) asparagine" evidence="4">
    <location>
        <position position="1147"/>
    </location>
</feature>
<feature type="disulfide bond" evidence="3">
    <location>
        <begin position="279"/>
        <end position="335"/>
    </location>
</feature>
<feature type="disulfide bond" evidence="3">
    <location>
        <begin position="344"/>
        <end position="350"/>
    </location>
</feature>
<feature type="disulfide bond" evidence="3">
    <location>
        <begin position="721"/>
        <end position="727"/>
    </location>
</feature>
<feature type="disulfide bond" evidence="3">
    <location>
        <begin position="759"/>
        <end position="768"/>
    </location>
</feature>
<feature type="disulfide bond" evidence="3">
    <location>
        <begin position="1131"/>
        <end position="1151"/>
    </location>
</feature>
<feature type="disulfide bond" evidence="3">
    <location>
        <begin position="1495"/>
        <end position="1510"/>
    </location>
</feature>
<feature type="sequence conflict" description="In Ref. 2; ABB29446 and 3; AAI63558." evidence="8" ref="2 3">
    <location>
        <position position="1089"/>
    </location>
</feature>
<accession>Q20JQ7</accession>
<accession>Q2XVR2</accession>
<sequence>MARLLPPTGTDVFRPLTLESLAEIDRRMAEEAAEQERMKEQNVKVAEEDLPKPTSDLEAGKVLPFIYGDPPPNLLNVPIEELDPYYKAQKTFIVIDKKNTIYRFNTEPACYCLSPFNPVRRAAIRILIHSLFSLVIMLTILTNCVFMAMSDPPGWSKILEYVFTGIYTFEAMVKVLSRGFCIGDFTFLRDPWNWLDFMVISMAYLTEFVDLGNISALRTFRVLRALKTITVIPGLKTIVGALIQSVKKLADVMILTVFCLSVFALIGLQLFMGNLRQKCVLWPPVGWYSDNLTVLSNYTDINGNGTANSTFDYQKYINSEENYYYVPGQMDPLVCGNSSDAGLCPEGYICLKAGRNPNYGYTSYDNFGWAFLALFRLMTQDFWENLFQLTLRAAGKTYMIFFVVIIFLGSFYLINLILAVVAMAYAEQNEATAAEAKEKEEEYAKIMEQLKKQAEQKNGMVNGSKTSLSSKKKGDNDQMQSDYDGIALKPLSKSNGSKGNINYLEVPDSQIRKPSVVSAVESALDAQEDIERPCPPGWYKFADIFLKWDCCIPWVKFKRIVYLFVMDPFVDLGITLCIVLNTVFMAMEHYPMSVHVEEVLAIGNLVFTGIFAAEMVLKLIALDPYYYFQVGWNIFDSIIVTMSLVELMLADVEGLSVLRSFRLMRVFKLAKSWPTLNMLIKIIGNSVGALGNLTLVLAIIVFIFAVVGMQLFGKSYTDSVCKISSDCELPRWHMADFFHAFLIIFRVLCGEWIETMWDCMEVAGQGMCIIVFMMVMVIGNLVVLNLFLALLLSSFSGDNLSASDDDGENNLQIAISRITRGIDWIKAFVNKHVRQCLNLKPKEEGAKVNGEGDAKMNAIMNSSSSMVKVPIANGESDDDDGNGSSEDEDDEGRDINMKKKNGDESSTCSTVDKPPEVEDLVEEEEEDLTSPEDCYTENCIRRCPCLDLDVSQGKGKAWWNFRKTCFAIVEHSYFETFIIFMILLSSGALAFEDIYIEQRRMIKIILEYADQVFTYVFVVEMLLKWVAYGFKVYFTNAWCWLDFLIVDVSLISLTANILGYSELGAIKSLRTLRALRPLRALSRFEGMRVVVVNALVGAIPSIFNVLLVCLIFWLIFSIMGVNLFAGKFYYCFNETSEEVFDHNVVNNKTDCYELMEFHPEVRWMNGKINFDNVGMGYLALLQVATFKGWMDIMYSAVDSRAIESQPVYEANLYMYIYFVIFIIFGSFFTLNLFIGVIIDNFNQQKAKLGGTDIFMTEEQKKYYNAMKKLGSKKPQKPIPRPTNCCQGLVFDFVTQQFFDIFIMVMICLNMVTMMVETDDQSAEIEEILFYINFAFIILFTGECVLKITALRYHYFSIGWNIFDFVVVILSILGIGLADLIEKYFVSPTLFRVIRLARIGRVLRLIRGAKGIRTLLFALMMSLPALFNIGLLLFLIMFIFSIFGMSNFAYVKKEVGIDDMMNFETFGNSIICMFMITTSAGWDGLLAPILNSPPDCDPDVDNPGSTTRGNCGNAAVGIVFFCSYIVMSFLVVVNMYIAIILENFNVATEESSDPLCEDDFEMFYETWEKFDPTASQFIDYNRLSEFCDTLKDPLRIPKPNTLKLITMDIPMVTGDKIHCLDLLLALTGEVLGGSDQMDGMKATMEEKFMANNPSKASYEPITSTLKRKQEEVAASTIQRAYRSHILKRCVKQASYMYRDKTGSKKPTGEAPEKVGMIAENMRSLYGDQAVEDDHPVGCSFSQHGKTQFGAKRPPVKVQSDVVLHSAPFPVPESSTAADNLRESIV</sequence>
<name>SC4AB_DANRE</name>
<protein>
    <recommendedName>
        <fullName>Sodium channel protein type 4 subunit alpha B</fullName>
    </recommendedName>
    <alternativeName>
        <fullName>Voltage-gated sodium channel subunit alpha Nav1.4b</fullName>
    </alternativeName>
</protein>
<dbReference type="EMBL" id="DQ149505">
    <property type="protein sequence ID" value="ABA54920.1"/>
    <property type="molecule type" value="mRNA"/>
</dbReference>
<dbReference type="EMBL" id="DQ221254">
    <property type="protein sequence ID" value="ABB29446.2"/>
    <property type="molecule type" value="Genomic_DNA"/>
</dbReference>
<dbReference type="EMBL" id="BC163558">
    <property type="protein sequence ID" value="AAI63558.1"/>
    <property type="molecule type" value="mRNA"/>
</dbReference>
<dbReference type="RefSeq" id="NP_001038530.1">
    <property type="nucleotide sequence ID" value="NM_001045065.1"/>
</dbReference>
<dbReference type="SMR" id="Q20JQ7"/>
<dbReference type="FunCoup" id="Q20JQ7">
    <property type="interactions" value="122"/>
</dbReference>
<dbReference type="STRING" id="7955.ENSDARP00000094779"/>
<dbReference type="GlyCosmos" id="Q20JQ7">
    <property type="glycosylation" value="6 sites, No reported glycans"/>
</dbReference>
<dbReference type="PaxDb" id="7955-ENSDARP00000044156"/>
<dbReference type="GeneID" id="564977"/>
<dbReference type="KEGG" id="dre:564977"/>
<dbReference type="AGR" id="ZFIN:ZDB-GENE-051201-1"/>
<dbReference type="CTD" id="564977"/>
<dbReference type="ZFIN" id="ZDB-GENE-051201-1">
    <property type="gene designation" value="scn4ab"/>
</dbReference>
<dbReference type="eggNOG" id="KOG2301">
    <property type="taxonomic scope" value="Eukaryota"/>
</dbReference>
<dbReference type="HOGENOM" id="CLU_000540_5_0_1"/>
<dbReference type="InParanoid" id="Q20JQ7"/>
<dbReference type="OrthoDB" id="2984333at2759"/>
<dbReference type="PhylomeDB" id="Q20JQ7"/>
<dbReference type="TreeFam" id="TF323985"/>
<dbReference type="PRO" id="PR:Q20JQ7"/>
<dbReference type="Proteomes" id="UP000000437">
    <property type="component" value="Chromosome 3"/>
</dbReference>
<dbReference type="GO" id="GO:0030424">
    <property type="term" value="C:axon"/>
    <property type="evidence" value="ECO:0000318"/>
    <property type="project" value="GO_Central"/>
</dbReference>
<dbReference type="GO" id="GO:0001518">
    <property type="term" value="C:voltage-gated sodium channel complex"/>
    <property type="evidence" value="ECO:0000318"/>
    <property type="project" value="GO_Central"/>
</dbReference>
<dbReference type="GO" id="GO:0005248">
    <property type="term" value="F:voltage-gated sodium channel activity"/>
    <property type="evidence" value="ECO:0000318"/>
    <property type="project" value="GO_Central"/>
</dbReference>
<dbReference type="GO" id="GO:0086010">
    <property type="term" value="P:membrane depolarization during action potential"/>
    <property type="evidence" value="ECO:0000318"/>
    <property type="project" value="GO_Central"/>
</dbReference>
<dbReference type="GO" id="GO:0019228">
    <property type="term" value="P:neuronal action potential"/>
    <property type="evidence" value="ECO:0000318"/>
    <property type="project" value="GO_Central"/>
</dbReference>
<dbReference type="CDD" id="cd13433">
    <property type="entry name" value="Na_channel_gate"/>
    <property type="match status" value="1"/>
</dbReference>
<dbReference type="FunFam" id="1.10.238.10:FF:000002">
    <property type="entry name" value="Sodium channel protein"/>
    <property type="match status" value="1"/>
</dbReference>
<dbReference type="FunFam" id="1.10.287.70:FF:000001">
    <property type="entry name" value="Sodium channel protein"/>
    <property type="match status" value="1"/>
</dbReference>
<dbReference type="FunFam" id="1.20.120.350:FF:000002">
    <property type="entry name" value="Sodium channel protein"/>
    <property type="match status" value="1"/>
</dbReference>
<dbReference type="FunFam" id="1.20.120.350:FF:000004">
    <property type="entry name" value="Sodium channel protein"/>
    <property type="match status" value="1"/>
</dbReference>
<dbReference type="FunFam" id="1.20.120.350:FF:000005">
    <property type="entry name" value="Sodium channel protein"/>
    <property type="match status" value="1"/>
</dbReference>
<dbReference type="FunFam" id="1.20.5.1190:FF:000001">
    <property type="entry name" value="Sodium channel protein"/>
    <property type="match status" value="1"/>
</dbReference>
<dbReference type="FunFam" id="1.20.120.350:FF:000003">
    <property type="entry name" value="Voltage-dependent sodium channel"/>
    <property type="match status" value="1"/>
</dbReference>
<dbReference type="FunFam" id="1.10.287.70:FF:000049">
    <property type="entry name" value="Voltage-dependent sodium channel 2"/>
    <property type="match status" value="1"/>
</dbReference>
<dbReference type="Gene3D" id="1.10.287.70">
    <property type="match status" value="4"/>
</dbReference>
<dbReference type="Gene3D" id="1.10.238.10">
    <property type="entry name" value="EF-hand"/>
    <property type="match status" value="1"/>
</dbReference>
<dbReference type="Gene3D" id="1.20.5.1190">
    <property type="entry name" value="iswi atpase"/>
    <property type="match status" value="1"/>
</dbReference>
<dbReference type="Gene3D" id="1.20.120.350">
    <property type="entry name" value="Voltage-gated potassium channels. Chain C"/>
    <property type="match status" value="4"/>
</dbReference>
<dbReference type="InterPro" id="IPR005821">
    <property type="entry name" value="Ion_trans_dom"/>
</dbReference>
<dbReference type="InterPro" id="IPR001696">
    <property type="entry name" value="Na_channel_asu"/>
</dbReference>
<dbReference type="InterPro" id="IPR044564">
    <property type="entry name" value="Na_chnl_inactivation_gate"/>
</dbReference>
<dbReference type="InterPro" id="IPR010526">
    <property type="entry name" value="Na_trans_assoc_dom"/>
</dbReference>
<dbReference type="InterPro" id="IPR043203">
    <property type="entry name" value="VGCC_Ca_Na"/>
</dbReference>
<dbReference type="InterPro" id="IPR027359">
    <property type="entry name" value="Volt_channel_dom_sf"/>
</dbReference>
<dbReference type="PANTHER" id="PTHR10037:SF223">
    <property type="entry name" value="SODIUM CHANNEL PROTEIN TYPE 4 SUBUNIT ALPHA"/>
    <property type="match status" value="1"/>
</dbReference>
<dbReference type="PANTHER" id="PTHR10037">
    <property type="entry name" value="VOLTAGE-GATED CATION CHANNEL CALCIUM AND SODIUM"/>
    <property type="match status" value="1"/>
</dbReference>
<dbReference type="Pfam" id="PF00520">
    <property type="entry name" value="Ion_trans"/>
    <property type="match status" value="4"/>
</dbReference>
<dbReference type="Pfam" id="PF24609">
    <property type="entry name" value="IQ_SCN5A_C"/>
    <property type="match status" value="1"/>
</dbReference>
<dbReference type="Pfam" id="PF06512">
    <property type="entry name" value="Na_trans_assoc"/>
    <property type="match status" value="1"/>
</dbReference>
<dbReference type="PRINTS" id="PR00170">
    <property type="entry name" value="NACHANNEL"/>
</dbReference>
<dbReference type="SUPFAM" id="SSF81324">
    <property type="entry name" value="Voltage-gated potassium channels"/>
    <property type="match status" value="4"/>
</dbReference>
<dbReference type="PROSITE" id="PS50096">
    <property type="entry name" value="IQ"/>
    <property type="match status" value="1"/>
</dbReference>